<keyword id="KW-0963">Cytoplasm</keyword>
<keyword id="KW-0269">Exonuclease</keyword>
<keyword id="KW-0378">Hydrolase</keyword>
<keyword id="KW-0540">Nuclease</keyword>
<keyword id="KW-1185">Reference proteome</keyword>
<evidence type="ECO:0000255" key="1">
    <source>
        <dbReference type="HAMAP-Rule" id="MF_00337"/>
    </source>
</evidence>
<sequence length="83" mass="9273">MAENALADVKTLSFERAIEELESIVKRLEDGKVPLEESVAIYERGEALKRRCEELLRQAEARVEKITTDASGQVTGTEPLDVQ</sequence>
<feature type="chain" id="PRO_0000303728" description="Exodeoxyribonuclease 7 small subunit">
    <location>
        <begin position="1"/>
        <end position="83"/>
    </location>
</feature>
<comment type="function">
    <text evidence="1">Bidirectionally degrades single-stranded DNA into large acid-insoluble oligonucleotides, which are then degraded further into small acid-soluble oligonucleotides.</text>
</comment>
<comment type="catalytic activity">
    <reaction evidence="1">
        <text>Exonucleolytic cleavage in either 5'- to 3'- or 3'- to 5'-direction to yield nucleoside 5'-phosphates.</text>
        <dbReference type="EC" id="3.1.11.6"/>
    </reaction>
</comment>
<comment type="subunit">
    <text evidence="1">Heterooligomer composed of large and small subunits.</text>
</comment>
<comment type="subcellular location">
    <subcellularLocation>
        <location evidence="1">Cytoplasm</location>
    </subcellularLocation>
</comment>
<comment type="similarity">
    <text evidence="1">Belongs to the XseB family.</text>
</comment>
<protein>
    <recommendedName>
        <fullName evidence="1">Exodeoxyribonuclease 7 small subunit</fullName>
        <ecNumber evidence="1">3.1.11.6</ecNumber>
    </recommendedName>
    <alternativeName>
        <fullName evidence="1">Exodeoxyribonuclease VII small subunit</fullName>
        <shortName evidence="1">Exonuclease VII small subunit</shortName>
    </alternativeName>
</protein>
<dbReference type="EC" id="3.1.11.6" evidence="1"/>
<dbReference type="EMBL" id="CP000319">
    <property type="protein sequence ID" value="ABE61658.1"/>
    <property type="molecule type" value="Genomic_DNA"/>
</dbReference>
<dbReference type="RefSeq" id="WP_011509360.1">
    <property type="nucleotide sequence ID" value="NC_007964.1"/>
</dbReference>
<dbReference type="SMR" id="Q1QQ39"/>
<dbReference type="STRING" id="323097.Nham_0779"/>
<dbReference type="KEGG" id="nha:Nham_0779"/>
<dbReference type="eggNOG" id="COG1722">
    <property type="taxonomic scope" value="Bacteria"/>
</dbReference>
<dbReference type="HOGENOM" id="CLU_145918_0_3_5"/>
<dbReference type="OrthoDB" id="9808145at2"/>
<dbReference type="Proteomes" id="UP000001953">
    <property type="component" value="Chromosome"/>
</dbReference>
<dbReference type="GO" id="GO:0005829">
    <property type="term" value="C:cytosol"/>
    <property type="evidence" value="ECO:0007669"/>
    <property type="project" value="TreeGrafter"/>
</dbReference>
<dbReference type="GO" id="GO:0009318">
    <property type="term" value="C:exodeoxyribonuclease VII complex"/>
    <property type="evidence" value="ECO:0007669"/>
    <property type="project" value="InterPro"/>
</dbReference>
<dbReference type="GO" id="GO:0008855">
    <property type="term" value="F:exodeoxyribonuclease VII activity"/>
    <property type="evidence" value="ECO:0007669"/>
    <property type="project" value="UniProtKB-UniRule"/>
</dbReference>
<dbReference type="GO" id="GO:0006308">
    <property type="term" value="P:DNA catabolic process"/>
    <property type="evidence" value="ECO:0007669"/>
    <property type="project" value="UniProtKB-UniRule"/>
</dbReference>
<dbReference type="FunFam" id="1.10.287.1040:FF:000004">
    <property type="entry name" value="Exodeoxyribonuclease 7 small subunit"/>
    <property type="match status" value="1"/>
</dbReference>
<dbReference type="Gene3D" id="1.10.287.1040">
    <property type="entry name" value="Exonuclease VII, small subunit"/>
    <property type="match status" value="1"/>
</dbReference>
<dbReference type="HAMAP" id="MF_00337">
    <property type="entry name" value="Exonuc_7_S"/>
    <property type="match status" value="1"/>
</dbReference>
<dbReference type="InterPro" id="IPR003761">
    <property type="entry name" value="Exonuc_VII_S"/>
</dbReference>
<dbReference type="InterPro" id="IPR037004">
    <property type="entry name" value="Exonuc_VII_ssu_sf"/>
</dbReference>
<dbReference type="NCBIfam" id="NF002139">
    <property type="entry name" value="PRK00977.1-3"/>
    <property type="match status" value="1"/>
</dbReference>
<dbReference type="NCBIfam" id="NF002140">
    <property type="entry name" value="PRK00977.1-4"/>
    <property type="match status" value="1"/>
</dbReference>
<dbReference type="NCBIfam" id="TIGR01280">
    <property type="entry name" value="xseB"/>
    <property type="match status" value="1"/>
</dbReference>
<dbReference type="PANTHER" id="PTHR34137">
    <property type="entry name" value="EXODEOXYRIBONUCLEASE 7 SMALL SUBUNIT"/>
    <property type="match status" value="1"/>
</dbReference>
<dbReference type="PANTHER" id="PTHR34137:SF1">
    <property type="entry name" value="EXODEOXYRIBONUCLEASE 7 SMALL SUBUNIT"/>
    <property type="match status" value="1"/>
</dbReference>
<dbReference type="Pfam" id="PF02609">
    <property type="entry name" value="Exonuc_VII_S"/>
    <property type="match status" value="1"/>
</dbReference>
<dbReference type="PIRSF" id="PIRSF006488">
    <property type="entry name" value="Exonuc_VII_S"/>
    <property type="match status" value="1"/>
</dbReference>
<dbReference type="SUPFAM" id="SSF116842">
    <property type="entry name" value="XseB-like"/>
    <property type="match status" value="1"/>
</dbReference>
<gene>
    <name evidence="1" type="primary">xseB</name>
    <name type="ordered locus">Nham_0779</name>
</gene>
<accession>Q1QQ39</accession>
<reference key="1">
    <citation type="submission" date="2006-03" db="EMBL/GenBank/DDBJ databases">
        <title>Complete sequence of chromosome of Nitrobacter hamburgensis X14.</title>
        <authorList>
            <consortium name="US DOE Joint Genome Institute"/>
            <person name="Copeland A."/>
            <person name="Lucas S."/>
            <person name="Lapidus A."/>
            <person name="Barry K."/>
            <person name="Detter J.C."/>
            <person name="Glavina del Rio T."/>
            <person name="Hammon N."/>
            <person name="Israni S."/>
            <person name="Dalin E."/>
            <person name="Tice H."/>
            <person name="Pitluck S."/>
            <person name="Chain P."/>
            <person name="Malfatti S."/>
            <person name="Shin M."/>
            <person name="Vergez L."/>
            <person name="Schmutz J."/>
            <person name="Larimer F."/>
            <person name="Land M."/>
            <person name="Hauser L."/>
            <person name="Kyrpides N."/>
            <person name="Ivanova N."/>
            <person name="Ward B."/>
            <person name="Arp D."/>
            <person name="Klotz M."/>
            <person name="Stein L."/>
            <person name="O'Mullan G."/>
            <person name="Starkenburg S."/>
            <person name="Sayavedra L."/>
            <person name="Poret-Peterson A.T."/>
            <person name="Gentry M.E."/>
            <person name="Bruce D."/>
            <person name="Richardson P."/>
        </authorList>
    </citation>
    <scope>NUCLEOTIDE SEQUENCE [LARGE SCALE GENOMIC DNA]</scope>
    <source>
        <strain>DSM 10229 / NCIMB 13809 / X14</strain>
    </source>
</reference>
<organism>
    <name type="scientific">Nitrobacter hamburgensis (strain DSM 10229 / NCIMB 13809 / X14)</name>
    <dbReference type="NCBI Taxonomy" id="323097"/>
    <lineage>
        <taxon>Bacteria</taxon>
        <taxon>Pseudomonadati</taxon>
        <taxon>Pseudomonadota</taxon>
        <taxon>Alphaproteobacteria</taxon>
        <taxon>Hyphomicrobiales</taxon>
        <taxon>Nitrobacteraceae</taxon>
        <taxon>Nitrobacter</taxon>
    </lineage>
</organism>
<name>EX7S_NITHX</name>
<proteinExistence type="inferred from homology"/>